<gene>
    <name evidence="1" type="primary">nusB</name>
    <name type="ordered locus">Bphyt_3103</name>
</gene>
<evidence type="ECO:0000255" key="1">
    <source>
        <dbReference type="HAMAP-Rule" id="MF_00073"/>
    </source>
</evidence>
<protein>
    <recommendedName>
        <fullName evidence="1">Transcription antitermination protein NusB</fullName>
    </recommendedName>
    <alternativeName>
        <fullName evidence="1">Antitermination factor NusB</fullName>
    </alternativeName>
</protein>
<organism>
    <name type="scientific">Paraburkholderia phytofirmans (strain DSM 17436 / LMG 22146 / PsJN)</name>
    <name type="common">Burkholderia phytofirmans</name>
    <dbReference type="NCBI Taxonomy" id="398527"/>
    <lineage>
        <taxon>Bacteria</taxon>
        <taxon>Pseudomonadati</taxon>
        <taxon>Pseudomonadota</taxon>
        <taxon>Betaproteobacteria</taxon>
        <taxon>Burkholderiales</taxon>
        <taxon>Burkholderiaceae</taxon>
        <taxon>Paraburkholderia</taxon>
    </lineage>
</organism>
<dbReference type="EMBL" id="CP001052">
    <property type="protein sequence ID" value="ACD17495.1"/>
    <property type="molecule type" value="Genomic_DNA"/>
</dbReference>
<dbReference type="RefSeq" id="WP_012434069.1">
    <property type="nucleotide sequence ID" value="NC_010681.1"/>
</dbReference>
<dbReference type="SMR" id="B2T6D1"/>
<dbReference type="STRING" id="398527.Bphyt_3103"/>
<dbReference type="GeneID" id="97308121"/>
<dbReference type="KEGG" id="bpy:Bphyt_3103"/>
<dbReference type="eggNOG" id="COG0781">
    <property type="taxonomic scope" value="Bacteria"/>
</dbReference>
<dbReference type="HOGENOM" id="CLU_087843_4_1_4"/>
<dbReference type="OrthoDB" id="9789556at2"/>
<dbReference type="Proteomes" id="UP000001739">
    <property type="component" value="Chromosome 1"/>
</dbReference>
<dbReference type="GO" id="GO:0005829">
    <property type="term" value="C:cytosol"/>
    <property type="evidence" value="ECO:0007669"/>
    <property type="project" value="TreeGrafter"/>
</dbReference>
<dbReference type="GO" id="GO:0003723">
    <property type="term" value="F:RNA binding"/>
    <property type="evidence" value="ECO:0007669"/>
    <property type="project" value="UniProtKB-UniRule"/>
</dbReference>
<dbReference type="GO" id="GO:0006353">
    <property type="term" value="P:DNA-templated transcription termination"/>
    <property type="evidence" value="ECO:0007669"/>
    <property type="project" value="UniProtKB-UniRule"/>
</dbReference>
<dbReference type="GO" id="GO:0031564">
    <property type="term" value="P:transcription antitermination"/>
    <property type="evidence" value="ECO:0007669"/>
    <property type="project" value="UniProtKB-KW"/>
</dbReference>
<dbReference type="Gene3D" id="1.10.940.10">
    <property type="entry name" value="NusB-like"/>
    <property type="match status" value="1"/>
</dbReference>
<dbReference type="HAMAP" id="MF_00073">
    <property type="entry name" value="NusB"/>
    <property type="match status" value="1"/>
</dbReference>
<dbReference type="InterPro" id="IPR035926">
    <property type="entry name" value="NusB-like_sf"/>
</dbReference>
<dbReference type="InterPro" id="IPR011605">
    <property type="entry name" value="NusB_fam"/>
</dbReference>
<dbReference type="InterPro" id="IPR006027">
    <property type="entry name" value="NusB_RsmB_TIM44"/>
</dbReference>
<dbReference type="NCBIfam" id="TIGR01951">
    <property type="entry name" value="nusB"/>
    <property type="match status" value="1"/>
</dbReference>
<dbReference type="PANTHER" id="PTHR11078:SF3">
    <property type="entry name" value="ANTITERMINATION NUSB DOMAIN-CONTAINING PROTEIN"/>
    <property type="match status" value="1"/>
</dbReference>
<dbReference type="PANTHER" id="PTHR11078">
    <property type="entry name" value="N UTILIZATION SUBSTANCE PROTEIN B-RELATED"/>
    <property type="match status" value="1"/>
</dbReference>
<dbReference type="Pfam" id="PF01029">
    <property type="entry name" value="NusB"/>
    <property type="match status" value="1"/>
</dbReference>
<dbReference type="SUPFAM" id="SSF48013">
    <property type="entry name" value="NusB-like"/>
    <property type="match status" value="1"/>
</dbReference>
<comment type="function">
    <text evidence="1">Involved in transcription antitermination. Required for transcription of ribosomal RNA (rRNA) genes. Binds specifically to the boxA antiterminator sequence of the ribosomal RNA (rrn) operons.</text>
</comment>
<comment type="similarity">
    <text evidence="1">Belongs to the NusB family.</text>
</comment>
<feature type="chain" id="PRO_1000092534" description="Transcription antitermination protein NusB">
    <location>
        <begin position="1"/>
        <end position="144"/>
    </location>
</feature>
<name>NUSB_PARPJ</name>
<sequence>MKSARRRSRELATQGLYQWLLSGSPGGEIDAQLRGAQGFDKADHEHLDAILHGVIRDSEALSAAIAPCLDRPIEQLSPVERAVLLVAAFELKNHVDIPYRVVINEAVELAKTFGGADGYKYVNGVLDKLSAQLRVDETQAARKR</sequence>
<keyword id="KW-0694">RNA-binding</keyword>
<keyword id="KW-0804">Transcription</keyword>
<keyword id="KW-0889">Transcription antitermination</keyword>
<keyword id="KW-0805">Transcription regulation</keyword>
<accession>B2T6D1</accession>
<proteinExistence type="inferred from homology"/>
<reference key="1">
    <citation type="journal article" date="2011" name="J. Bacteriol.">
        <title>Complete genome sequence of the plant growth-promoting endophyte Burkholderia phytofirmans strain PsJN.</title>
        <authorList>
            <person name="Weilharter A."/>
            <person name="Mitter B."/>
            <person name="Shin M.V."/>
            <person name="Chain P.S."/>
            <person name="Nowak J."/>
            <person name="Sessitsch A."/>
        </authorList>
    </citation>
    <scope>NUCLEOTIDE SEQUENCE [LARGE SCALE GENOMIC DNA]</scope>
    <source>
        <strain>DSM 17436 / LMG 22146 / PsJN</strain>
    </source>
</reference>